<sequence length="430" mass="46006">MEKIIVRGGKQLNGSVKMEGAKNAVLPVIAATLLASKGTSVLKNVPNLSDVFTINEVLKYLNADVSFVNDEVTVNATGEITSDAPFEYVRKMRASIVVMGPLLARTGSARVALPGGCAIGSRPVDLHLKGFEAMGAIVKIENGYIEATAEKLVGAKVYLDFPSVGATQNIMMAATLAEGTTVIENVAREPEIVDLANFLNQMGARVIGAGTEVIRIEGVKELTATEHSIIPDRIEAGTFMIAAAITGGNVLIEDAVPEHISSLIAKLEEMGVQIIEEENGIRVIGPDKLKAVDVKTMPHPGFPTDMQSQMMVIQMLSEGTSIMTETVFENRFMHVEEMRRMNADMKIEGHSVIISGPAKLQGAEVAATDLRAAAALILAGLVADGYTQVTELKYLDRGYNNFHGKLQALGADVERVDDSKIDVTNLASLF</sequence>
<gene>
    <name evidence="1" type="primary">murA1</name>
    <name type="synonym">murA</name>
    <name type="synonym">murA-1</name>
    <name type="ordered locus">LMOf2365_2499</name>
</gene>
<evidence type="ECO:0000255" key="1">
    <source>
        <dbReference type="HAMAP-Rule" id="MF_00111"/>
    </source>
</evidence>
<reference key="1">
    <citation type="journal article" date="2004" name="Nucleic Acids Res.">
        <title>Whole genome comparisons of serotype 4b and 1/2a strains of the food-borne pathogen Listeria monocytogenes reveal new insights into the core genome components of this species.</title>
        <authorList>
            <person name="Nelson K.E."/>
            <person name="Fouts D.E."/>
            <person name="Mongodin E.F."/>
            <person name="Ravel J."/>
            <person name="DeBoy R.T."/>
            <person name="Kolonay J.F."/>
            <person name="Rasko D.A."/>
            <person name="Angiuoli S.V."/>
            <person name="Gill S.R."/>
            <person name="Paulsen I.T."/>
            <person name="Peterson J.D."/>
            <person name="White O."/>
            <person name="Nelson W.C."/>
            <person name="Nierman W.C."/>
            <person name="Beanan M.J."/>
            <person name="Brinkac L.M."/>
            <person name="Daugherty S.C."/>
            <person name="Dodson R.J."/>
            <person name="Durkin A.S."/>
            <person name="Madupu R."/>
            <person name="Haft D.H."/>
            <person name="Selengut J."/>
            <person name="Van Aken S.E."/>
            <person name="Khouri H.M."/>
            <person name="Fedorova N."/>
            <person name="Forberger H.A."/>
            <person name="Tran B."/>
            <person name="Kathariou S."/>
            <person name="Wonderling L.D."/>
            <person name="Uhlich G.A."/>
            <person name="Bayles D.O."/>
            <person name="Luchansky J.B."/>
            <person name="Fraser C.M."/>
        </authorList>
    </citation>
    <scope>NUCLEOTIDE SEQUENCE [LARGE SCALE GENOMIC DNA]</scope>
    <source>
        <strain>F2365</strain>
    </source>
</reference>
<name>MURA1_LISMF</name>
<comment type="function">
    <text evidence="1">Cell wall formation. Adds enolpyruvyl to UDP-N-acetylglucosamine.</text>
</comment>
<comment type="catalytic activity">
    <reaction evidence="1">
        <text>phosphoenolpyruvate + UDP-N-acetyl-alpha-D-glucosamine = UDP-N-acetyl-3-O-(1-carboxyvinyl)-alpha-D-glucosamine + phosphate</text>
        <dbReference type="Rhea" id="RHEA:18681"/>
        <dbReference type="ChEBI" id="CHEBI:43474"/>
        <dbReference type="ChEBI" id="CHEBI:57705"/>
        <dbReference type="ChEBI" id="CHEBI:58702"/>
        <dbReference type="ChEBI" id="CHEBI:68483"/>
        <dbReference type="EC" id="2.5.1.7"/>
    </reaction>
</comment>
<comment type="pathway">
    <text evidence="1">Cell wall biogenesis; peptidoglycan biosynthesis.</text>
</comment>
<comment type="subcellular location">
    <subcellularLocation>
        <location evidence="1">Cytoplasm</location>
    </subcellularLocation>
</comment>
<comment type="similarity">
    <text evidence="1">Belongs to the EPSP synthase family. MurA subfamily.</text>
</comment>
<proteinExistence type="inferred from homology"/>
<accession>Q71WQ2</accession>
<feature type="chain" id="PRO_0000178885" description="UDP-N-acetylglucosamine 1-carboxyvinyltransferase 1">
    <location>
        <begin position="1"/>
        <end position="430"/>
    </location>
</feature>
<feature type="active site" description="Proton donor" evidence="1">
    <location>
        <position position="117"/>
    </location>
</feature>
<feature type="binding site" evidence="1">
    <location>
        <begin position="22"/>
        <end position="23"/>
    </location>
    <ligand>
        <name>phosphoenolpyruvate</name>
        <dbReference type="ChEBI" id="CHEBI:58702"/>
    </ligand>
</feature>
<feature type="binding site" evidence="1">
    <location>
        <position position="93"/>
    </location>
    <ligand>
        <name>UDP-N-acetyl-alpha-D-glucosamine</name>
        <dbReference type="ChEBI" id="CHEBI:57705"/>
    </ligand>
</feature>
<feature type="binding site" evidence="1">
    <location>
        <begin position="122"/>
        <end position="126"/>
    </location>
    <ligand>
        <name>UDP-N-acetyl-alpha-D-glucosamine</name>
        <dbReference type="ChEBI" id="CHEBI:57705"/>
    </ligand>
</feature>
<feature type="binding site" evidence="1">
    <location>
        <position position="305"/>
    </location>
    <ligand>
        <name>UDP-N-acetyl-alpha-D-glucosamine</name>
        <dbReference type="ChEBI" id="CHEBI:57705"/>
    </ligand>
</feature>
<feature type="binding site" evidence="1">
    <location>
        <position position="327"/>
    </location>
    <ligand>
        <name>UDP-N-acetyl-alpha-D-glucosamine</name>
        <dbReference type="ChEBI" id="CHEBI:57705"/>
    </ligand>
</feature>
<feature type="modified residue" description="2-(S-cysteinyl)pyruvic acid O-phosphothioketal" evidence="1">
    <location>
        <position position="117"/>
    </location>
</feature>
<dbReference type="EC" id="2.5.1.7" evidence="1"/>
<dbReference type="EMBL" id="AE017262">
    <property type="protein sequence ID" value="AAT05264.1"/>
    <property type="molecule type" value="Genomic_DNA"/>
</dbReference>
<dbReference type="RefSeq" id="WP_003727894.1">
    <property type="nucleotide sequence ID" value="NC_002973.6"/>
</dbReference>
<dbReference type="SMR" id="Q71WQ2"/>
<dbReference type="KEGG" id="lmf:LMOf2365_2499"/>
<dbReference type="HOGENOM" id="CLU_027387_0_0_9"/>
<dbReference type="UniPathway" id="UPA00219"/>
<dbReference type="GO" id="GO:0005737">
    <property type="term" value="C:cytoplasm"/>
    <property type="evidence" value="ECO:0007669"/>
    <property type="project" value="UniProtKB-SubCell"/>
</dbReference>
<dbReference type="GO" id="GO:0008760">
    <property type="term" value="F:UDP-N-acetylglucosamine 1-carboxyvinyltransferase activity"/>
    <property type="evidence" value="ECO:0007669"/>
    <property type="project" value="UniProtKB-UniRule"/>
</dbReference>
<dbReference type="GO" id="GO:0051301">
    <property type="term" value="P:cell division"/>
    <property type="evidence" value="ECO:0007669"/>
    <property type="project" value="UniProtKB-KW"/>
</dbReference>
<dbReference type="GO" id="GO:0071555">
    <property type="term" value="P:cell wall organization"/>
    <property type="evidence" value="ECO:0007669"/>
    <property type="project" value="UniProtKB-KW"/>
</dbReference>
<dbReference type="GO" id="GO:0009252">
    <property type="term" value="P:peptidoglycan biosynthetic process"/>
    <property type="evidence" value="ECO:0007669"/>
    <property type="project" value="UniProtKB-UniRule"/>
</dbReference>
<dbReference type="GO" id="GO:0008360">
    <property type="term" value="P:regulation of cell shape"/>
    <property type="evidence" value="ECO:0007669"/>
    <property type="project" value="UniProtKB-KW"/>
</dbReference>
<dbReference type="GO" id="GO:0019277">
    <property type="term" value="P:UDP-N-acetylgalactosamine biosynthetic process"/>
    <property type="evidence" value="ECO:0007669"/>
    <property type="project" value="InterPro"/>
</dbReference>
<dbReference type="CDD" id="cd01555">
    <property type="entry name" value="UdpNAET"/>
    <property type="match status" value="1"/>
</dbReference>
<dbReference type="FunFam" id="3.65.10.10:FF:000001">
    <property type="entry name" value="UDP-N-acetylglucosamine 1-carboxyvinyltransferase"/>
    <property type="match status" value="1"/>
</dbReference>
<dbReference type="Gene3D" id="3.65.10.10">
    <property type="entry name" value="Enolpyruvate transferase domain"/>
    <property type="match status" value="2"/>
</dbReference>
<dbReference type="HAMAP" id="MF_00111">
    <property type="entry name" value="MurA"/>
    <property type="match status" value="1"/>
</dbReference>
<dbReference type="InterPro" id="IPR001986">
    <property type="entry name" value="Enolpyruvate_Tfrase_dom"/>
</dbReference>
<dbReference type="InterPro" id="IPR036968">
    <property type="entry name" value="Enolpyruvate_Tfrase_sf"/>
</dbReference>
<dbReference type="InterPro" id="IPR050068">
    <property type="entry name" value="MurA_subfamily"/>
</dbReference>
<dbReference type="InterPro" id="IPR013792">
    <property type="entry name" value="RNA3'P_cycl/enolpyr_Trfase_a/b"/>
</dbReference>
<dbReference type="InterPro" id="IPR005750">
    <property type="entry name" value="UDP_GlcNAc_COvinyl_MurA"/>
</dbReference>
<dbReference type="NCBIfam" id="TIGR01072">
    <property type="entry name" value="murA"/>
    <property type="match status" value="1"/>
</dbReference>
<dbReference type="NCBIfam" id="NF006873">
    <property type="entry name" value="PRK09369.1"/>
    <property type="match status" value="1"/>
</dbReference>
<dbReference type="PANTHER" id="PTHR43783">
    <property type="entry name" value="UDP-N-ACETYLGLUCOSAMINE 1-CARBOXYVINYLTRANSFERASE"/>
    <property type="match status" value="1"/>
</dbReference>
<dbReference type="PANTHER" id="PTHR43783:SF1">
    <property type="entry name" value="UDP-N-ACETYLGLUCOSAMINE 1-CARBOXYVINYLTRANSFERASE"/>
    <property type="match status" value="1"/>
</dbReference>
<dbReference type="Pfam" id="PF00275">
    <property type="entry name" value="EPSP_synthase"/>
    <property type="match status" value="1"/>
</dbReference>
<dbReference type="SUPFAM" id="SSF55205">
    <property type="entry name" value="EPT/RTPC-like"/>
    <property type="match status" value="1"/>
</dbReference>
<organism>
    <name type="scientific">Listeria monocytogenes serotype 4b (strain F2365)</name>
    <dbReference type="NCBI Taxonomy" id="265669"/>
    <lineage>
        <taxon>Bacteria</taxon>
        <taxon>Bacillati</taxon>
        <taxon>Bacillota</taxon>
        <taxon>Bacilli</taxon>
        <taxon>Bacillales</taxon>
        <taxon>Listeriaceae</taxon>
        <taxon>Listeria</taxon>
    </lineage>
</organism>
<keyword id="KW-0131">Cell cycle</keyword>
<keyword id="KW-0132">Cell division</keyword>
<keyword id="KW-0133">Cell shape</keyword>
<keyword id="KW-0961">Cell wall biogenesis/degradation</keyword>
<keyword id="KW-0963">Cytoplasm</keyword>
<keyword id="KW-0573">Peptidoglycan synthesis</keyword>
<keyword id="KW-0670">Pyruvate</keyword>
<keyword id="KW-0808">Transferase</keyword>
<protein>
    <recommendedName>
        <fullName evidence="1">UDP-N-acetylglucosamine 1-carboxyvinyltransferase 1</fullName>
        <ecNumber evidence="1">2.5.1.7</ecNumber>
    </recommendedName>
    <alternativeName>
        <fullName evidence="1">Enoylpyruvate transferase 1</fullName>
    </alternativeName>
    <alternativeName>
        <fullName evidence="1">UDP-N-acetylglucosamine enolpyruvyl transferase 1</fullName>
        <shortName evidence="1">EPT 1</shortName>
    </alternativeName>
</protein>